<feature type="chain" id="PRO_0000279145" description="Transposon Ty1-NL2 Gag-Pol polyprotein">
    <location>
        <begin position="1"/>
        <end position="1749"/>
    </location>
</feature>
<feature type="chain" id="PRO_0000279146" description="Capsid protein" evidence="1">
    <location>
        <begin position="1"/>
        <end position="401"/>
    </location>
</feature>
<feature type="chain" id="PRO_0000279147" description="Ty1 protease" evidence="1">
    <location>
        <begin position="402"/>
        <end position="582"/>
    </location>
</feature>
<feature type="chain" id="PRO_0000279148" description="Integrase" evidence="1">
    <location>
        <begin position="583"/>
        <end position="1211"/>
    </location>
</feature>
<feature type="chain" id="PRO_0000279149" description="Reverse transcriptase/ribonuclease H" evidence="1">
    <location>
        <begin position="1212"/>
        <end position="1749"/>
    </location>
</feature>
<feature type="domain" description="Integrase catalytic" evidence="2">
    <location>
        <begin position="660"/>
        <end position="835"/>
    </location>
</feature>
<feature type="domain" description="Reverse transcriptase Ty1/copia-type">
    <location>
        <begin position="1332"/>
        <end position="1470"/>
    </location>
</feature>
<feature type="domain" description="RNase H Ty1/copia-type">
    <location>
        <begin position="1604"/>
        <end position="1746"/>
    </location>
</feature>
<feature type="region of interest" description="Disordered" evidence="4">
    <location>
        <begin position="1"/>
        <end position="97"/>
    </location>
</feature>
<feature type="region of interest" description="Disordered" evidence="4">
    <location>
        <begin position="129"/>
        <end position="171"/>
    </location>
</feature>
<feature type="region of interest" description="RNA-binding" evidence="1">
    <location>
        <begin position="299"/>
        <end position="401"/>
    </location>
</feature>
<feature type="region of interest" description="Disordered" evidence="4">
    <location>
        <begin position="352"/>
        <end position="421"/>
    </location>
</feature>
<feature type="region of interest" description="Integrase-type zinc finger-like">
    <location>
        <begin position="583"/>
        <end position="640"/>
    </location>
</feature>
<feature type="region of interest" description="Disordered" evidence="4">
    <location>
        <begin position="945"/>
        <end position="1166"/>
    </location>
</feature>
<feature type="short sequence motif" description="Bipartite nuclear localization signal" evidence="1">
    <location>
        <begin position="1172"/>
        <end position="1206"/>
    </location>
</feature>
<feature type="compositionally biased region" description="Polar residues" evidence="4">
    <location>
        <begin position="1"/>
        <end position="23"/>
    </location>
</feature>
<feature type="compositionally biased region" description="Polar residues" evidence="4">
    <location>
        <begin position="48"/>
        <end position="60"/>
    </location>
</feature>
<feature type="compositionally biased region" description="Polar residues" evidence="4">
    <location>
        <begin position="71"/>
        <end position="97"/>
    </location>
</feature>
<feature type="compositionally biased region" description="Polar residues" evidence="4">
    <location>
        <begin position="129"/>
        <end position="152"/>
    </location>
</feature>
<feature type="compositionally biased region" description="Low complexity" evidence="4">
    <location>
        <begin position="153"/>
        <end position="165"/>
    </location>
</feature>
<feature type="compositionally biased region" description="Low complexity" evidence="4">
    <location>
        <begin position="402"/>
        <end position="418"/>
    </location>
</feature>
<feature type="compositionally biased region" description="Low complexity" evidence="4">
    <location>
        <begin position="954"/>
        <end position="963"/>
    </location>
</feature>
<feature type="compositionally biased region" description="Polar residues" evidence="4">
    <location>
        <begin position="999"/>
        <end position="1009"/>
    </location>
</feature>
<feature type="compositionally biased region" description="Basic and acidic residues" evidence="4">
    <location>
        <begin position="1032"/>
        <end position="1047"/>
    </location>
</feature>
<feature type="compositionally biased region" description="Polar residues" evidence="4">
    <location>
        <begin position="1048"/>
        <end position="1076"/>
    </location>
</feature>
<feature type="compositionally biased region" description="Polar residues" evidence="4">
    <location>
        <begin position="1089"/>
        <end position="1100"/>
    </location>
</feature>
<feature type="active site" description="For protease activity; shared with dimeric partner" evidence="3">
    <location>
        <position position="461"/>
    </location>
</feature>
<feature type="binding site" evidence="2">
    <location>
        <position position="671"/>
    </location>
    <ligand>
        <name>Mg(2+)</name>
        <dbReference type="ChEBI" id="CHEBI:18420"/>
        <label>1</label>
        <note>catalytic; for integrase activity</note>
    </ligand>
</feature>
<feature type="binding site" evidence="2">
    <location>
        <position position="736"/>
    </location>
    <ligand>
        <name>Mg(2+)</name>
        <dbReference type="ChEBI" id="CHEBI:18420"/>
        <label>1</label>
        <note>catalytic; for integrase activity</note>
    </ligand>
</feature>
<feature type="binding site" evidence="2">
    <location>
        <position position="1340"/>
    </location>
    <ligand>
        <name>Mg(2+)</name>
        <dbReference type="ChEBI" id="CHEBI:18420"/>
        <label>2</label>
        <note>catalytic; for reverse transcriptase activity</note>
    </ligand>
</feature>
<feature type="binding site" evidence="2">
    <location>
        <position position="1421"/>
    </location>
    <ligand>
        <name>Mg(2+)</name>
        <dbReference type="ChEBI" id="CHEBI:18420"/>
        <label>2</label>
        <note>catalytic; for reverse transcriptase activity</note>
    </ligand>
</feature>
<feature type="binding site" evidence="2">
    <location>
        <position position="1422"/>
    </location>
    <ligand>
        <name>Mg(2+)</name>
        <dbReference type="ChEBI" id="CHEBI:18420"/>
        <label>2</label>
        <note>catalytic; for reverse transcriptase activity</note>
    </ligand>
</feature>
<feature type="binding site" evidence="2">
    <location>
        <position position="1604"/>
    </location>
    <ligand>
        <name>Mg(2+)</name>
        <dbReference type="ChEBI" id="CHEBI:18420"/>
        <label>3</label>
        <note>catalytic; for RNase H activity</note>
    </ligand>
</feature>
<feature type="binding site" evidence="2">
    <location>
        <position position="1646"/>
    </location>
    <ligand>
        <name>Mg(2+)</name>
        <dbReference type="ChEBI" id="CHEBI:18420"/>
        <label>3</label>
        <note>catalytic; for RNase H activity</note>
    </ligand>
</feature>
<feature type="binding site" evidence="2">
    <location>
        <position position="1679"/>
    </location>
    <ligand>
        <name>Mg(2+)</name>
        <dbReference type="ChEBI" id="CHEBI:18420"/>
        <label>3</label>
        <note>catalytic; for RNase H activity</note>
    </ligand>
</feature>
<feature type="site" description="Cleavage; by Ty1 protease" evidence="1">
    <location>
        <begin position="401"/>
        <end position="402"/>
    </location>
</feature>
<feature type="site" description="Cleavage; by Ty1 protease" evidence="1">
    <location>
        <begin position="582"/>
        <end position="583"/>
    </location>
</feature>
<feature type="site" description="Cleavage; by Ty1 protease" evidence="1">
    <location>
        <begin position="1211"/>
        <end position="1212"/>
    </location>
</feature>
<sequence length="1749" mass="198198">MESQQLSQHSPISHGSACASVTSKEVHTNQDPLDVSASKIQEYDKASTKANSQQTTTPASSAVPENPHHASPQTAQSHSPQNGPYPQQCMMTQNQANPSDWSFYGRPSMIPYTPYQMSPMYFPPGPHSQFPQYPSSVGTPLSTPSPESGNTFTDSSSADSDMTSTKKYVRPPPMLTSPNDFLNWVKTYIKFLQNSNLGGIIPTVNGKPVRQITDDELTFLYNTFQIFAPSQFLPTWVKDILSVDYTDIMKILSKSIEKMQSDTQEANDIVTLANLQYNGSTPADAFETKVTNIIDRLNNNGIHINNKVACQLIMRGLSGEYKFLRYTRHRHLNMTVAELFLDIHAIYEEQQGSRNSKPNYRRNPSDEKNDSRSYTNTTKPKVIARNPQKTNNSKSKTARAHNVSTSNNSPSTDNDSISKSTTEPIQLNNKHDLHLGQKLTESTVNHTNHSDDELPGHLLLDSGASRTLIRSAHHIHSASSNPDINVVDAQKRNIPINAIGDLQFHFQDNTKTSIKVLHTPNIAYDLLSLNELAAVDITACFTKNVLERSDGTVLAPIVKYGDFYWVSKKYLLPSNISVPTINNVHTSESTRKYPYPFIHRMLAHANAQTIRYSLKNNTITYFNESDVDWSSAIDYQCPDCLIGKSTKHRHIKGSRLKYQNSYEPFQYLHTDIFGPVHNLPKSAPSYFISFTDETTKFRWVYPLHDRREDSILDVFTTILAFIKNQFQASVLVIQMDRGSEYTNRTLHKFLEKNGITPCYTTTADSRAHGVAERLNRTLLDDCRTQLQCSGLPNHLWFSAIEFSTIVRNSLASPKSKKSARQHAGLAGLDISTLLPFGQPVIVNDHNPNSKIHPRGIPGYALHPSRNSYGYIIYLPSLKKTVDTTNYVILQGKESRLDQFNYDALTFDEDLNRLTASYQSFIASNEIQQSDDLNFQSDIELHPEQPRNVLSKAVSPTDSTPPSTHTEDSKRVSKTNIRAPREVDPNISKSDILPSKKRSSTPQISDIESTGSGGMHRLDVPLLAPMSQSNTHESSHTSKSKDFRHSDSYSDNETNHTNVPISSTGGTNNKTVPQTSEQETEKRIIHRSPSIDTSSSESNSLHHVVPIKTSDTCPKENTEESIIADLPLPDLPPEPPTKLSDSFKELPPINSRQTNSSLGGIGDSNAYTTINSKKRSLEDNETEIKVSRDTWNTKNMRSLEPPRSKKRIHLIAAVKAVKSIKPIRTTLRYDEAITYNKDIKEKEKYIEAYHKEVNQLLKMKTWDTDKYYDRKEIDPKRVINSMFIFNRKRDGTHKARFVARGDIQHPDTYDSGMQSNTVHHYALMTSLSLALDNNYYITQLDISSAYLYADIKEELYIRPPPHLGMNDKLIRLKKSLYGLKQSGANWYETIKSYLIEQCDMEEVRGWSCVFKNSQVTICLFVDDMILFSKDLNANKKIITTLKKQYDTKIINLGESDNEIQYDILGLEIKYQRSKYMKLGMEKSLTEKLPKLNVHLNPKGKKLSAPGQPGLYIDQDELEIDEDEYKEKVHEMQKLIGLASYVGYKFRFDLLYYINTLAQHILFPSRQVLDMTYELIQFMWDTRDKQLIWHKNKPTKPDNKLVAISDASYGNQPYYKSQIGNIFLLNGKVIGGKSTKASLTCTSTTEAEIHAVSEAIPLLNNLSHLVQELNKKPIIKGLLTDSRSTISIIKSTNEEKFRNRFFGTKAMRLRDEVSGNNLYVYYIETKKNIADVMTKPLPIKTFKLLTNKWIH</sequence>
<gene>
    <name type="primary">TY1B-NL2</name>
    <name type="synonym">YNLWTy1-2 POL</name>
    <name type="ordered locus">YNL054W-B</name>
    <name type="ORF">N2453</name>
</gene>
<dbReference type="EC" id="3.4.23.-"/>
<dbReference type="EC" id="2.7.7.49"/>
<dbReference type="EC" id="2.7.7.7"/>
<dbReference type="EC" id="3.1.26.4"/>
<dbReference type="EMBL" id="Z71331">
    <property type="protein sequence ID" value="CAA95928.1"/>
    <property type="molecule type" value="Genomic_DNA"/>
</dbReference>
<dbReference type="EMBL" id="Z71330">
    <property type="protein sequence ID" value="CAA95924.1"/>
    <property type="molecule type" value="Genomic_DNA"/>
</dbReference>
<dbReference type="EMBL" id="BK006947">
    <property type="protein sequence ID" value="DAA64521.1"/>
    <property type="molecule type" value="Genomic_DNA"/>
</dbReference>
<dbReference type="PIR" id="S69972">
    <property type="entry name" value="S69972"/>
</dbReference>
<dbReference type="RefSeq" id="NP_001268465.1">
    <molecule id="Q99337-1"/>
    <property type="nucleotide sequence ID" value="NM_001281536.2"/>
</dbReference>
<dbReference type="BioGRID" id="35769">
    <property type="interactions" value="11"/>
</dbReference>
<dbReference type="DIP" id="DIP-9004N"/>
<dbReference type="FunCoup" id="Q99337">
    <property type="interactions" value="82"/>
</dbReference>
<dbReference type="IntAct" id="Q99337">
    <property type="interactions" value="5"/>
</dbReference>
<dbReference type="MINT" id="Q99337"/>
<dbReference type="CarbonylDB" id="Q99337"/>
<dbReference type="GlyGen" id="Q99337">
    <property type="glycosylation" value="3 sites"/>
</dbReference>
<dbReference type="PeptideAtlas" id="Q99337"/>
<dbReference type="GeneID" id="855672"/>
<dbReference type="KEGG" id="sce:YNL054W-B"/>
<dbReference type="AGR" id="SGD:S000007385"/>
<dbReference type="SGD" id="S000007385">
    <property type="gene designation" value="YNL054W-B"/>
</dbReference>
<dbReference type="VEuPathDB" id="FungiDB:YNL054W-B"/>
<dbReference type="InParanoid" id="Q99337"/>
<dbReference type="OrthoDB" id="5423336at2759"/>
<dbReference type="BioGRID-ORCS" id="855672">
    <property type="hits" value="0 hits in 10 CRISPR screens"/>
</dbReference>
<dbReference type="Proteomes" id="UP000002311">
    <property type="component" value="Chromosome XIV"/>
</dbReference>
<dbReference type="RNAct" id="Q99337">
    <property type="molecule type" value="protein"/>
</dbReference>
<dbReference type="GO" id="GO:0005737">
    <property type="term" value="C:cytoplasm"/>
    <property type="evidence" value="ECO:0007669"/>
    <property type="project" value="UniProtKB-SubCell"/>
</dbReference>
<dbReference type="GO" id="GO:0005634">
    <property type="term" value="C:nucleus"/>
    <property type="evidence" value="ECO:0000314"/>
    <property type="project" value="SGD"/>
</dbReference>
<dbReference type="GO" id="GO:0004190">
    <property type="term" value="F:aspartic-type endopeptidase activity"/>
    <property type="evidence" value="ECO:0007669"/>
    <property type="project" value="UniProtKB-KW"/>
</dbReference>
<dbReference type="GO" id="GO:0005524">
    <property type="term" value="F:ATP binding"/>
    <property type="evidence" value="ECO:0007669"/>
    <property type="project" value="UniProtKB-KW"/>
</dbReference>
<dbReference type="GO" id="GO:0003677">
    <property type="term" value="F:DNA binding"/>
    <property type="evidence" value="ECO:0007669"/>
    <property type="project" value="UniProtKB-KW"/>
</dbReference>
<dbReference type="GO" id="GO:0003887">
    <property type="term" value="F:DNA-directed DNA polymerase activity"/>
    <property type="evidence" value="ECO:0007669"/>
    <property type="project" value="UniProtKB-KW"/>
</dbReference>
<dbReference type="GO" id="GO:0003723">
    <property type="term" value="F:RNA binding"/>
    <property type="evidence" value="ECO:0007669"/>
    <property type="project" value="UniProtKB-KW"/>
</dbReference>
<dbReference type="GO" id="GO:0003964">
    <property type="term" value="F:RNA-directed DNA polymerase activity"/>
    <property type="evidence" value="ECO:0007669"/>
    <property type="project" value="UniProtKB-KW"/>
</dbReference>
<dbReference type="GO" id="GO:0004523">
    <property type="term" value="F:RNA-DNA hybrid ribonuclease activity"/>
    <property type="evidence" value="ECO:0007669"/>
    <property type="project" value="UniProtKB-EC"/>
</dbReference>
<dbReference type="GO" id="GO:0008270">
    <property type="term" value="F:zinc ion binding"/>
    <property type="evidence" value="ECO:0007669"/>
    <property type="project" value="UniProtKB-KW"/>
</dbReference>
<dbReference type="GO" id="GO:0015074">
    <property type="term" value="P:DNA integration"/>
    <property type="evidence" value="ECO:0007669"/>
    <property type="project" value="UniProtKB-KW"/>
</dbReference>
<dbReference type="GO" id="GO:0006310">
    <property type="term" value="P:DNA recombination"/>
    <property type="evidence" value="ECO:0007669"/>
    <property type="project" value="UniProtKB-KW"/>
</dbReference>
<dbReference type="GO" id="GO:0006508">
    <property type="term" value="P:proteolysis"/>
    <property type="evidence" value="ECO:0007669"/>
    <property type="project" value="UniProtKB-KW"/>
</dbReference>
<dbReference type="GO" id="GO:0032196">
    <property type="term" value="P:transposition"/>
    <property type="evidence" value="ECO:0007669"/>
    <property type="project" value="UniProtKB-KW"/>
</dbReference>
<dbReference type="GO" id="GO:0075523">
    <property type="term" value="P:viral translational frameshifting"/>
    <property type="evidence" value="ECO:0007669"/>
    <property type="project" value="UniProtKB-KW"/>
</dbReference>
<dbReference type="CDD" id="cd09272">
    <property type="entry name" value="RNase_HI_RT_Ty1"/>
    <property type="match status" value="1"/>
</dbReference>
<dbReference type="FunFam" id="3.30.420.10:FF:000050">
    <property type="entry name" value="Transposon Ty2-DR3 Gag-Pol polyprotein"/>
    <property type="match status" value="1"/>
</dbReference>
<dbReference type="Gene3D" id="3.30.420.10">
    <property type="entry name" value="Ribonuclease H-like superfamily/Ribonuclease H"/>
    <property type="match status" value="1"/>
</dbReference>
<dbReference type="InterPro" id="IPR001969">
    <property type="entry name" value="Aspartic_peptidase_AS"/>
</dbReference>
<dbReference type="InterPro" id="IPR043502">
    <property type="entry name" value="DNA/RNA_pol_sf"/>
</dbReference>
<dbReference type="InterPro" id="IPR001584">
    <property type="entry name" value="Integrase_cat-core"/>
</dbReference>
<dbReference type="InterPro" id="IPR039537">
    <property type="entry name" value="Retrotran_Ty1/copia-like"/>
</dbReference>
<dbReference type="InterPro" id="IPR012337">
    <property type="entry name" value="RNaseH-like_sf"/>
</dbReference>
<dbReference type="InterPro" id="IPR036397">
    <property type="entry name" value="RNaseH_sf"/>
</dbReference>
<dbReference type="InterPro" id="IPR013103">
    <property type="entry name" value="RVT_2"/>
</dbReference>
<dbReference type="InterPro" id="IPR015820">
    <property type="entry name" value="TYA"/>
</dbReference>
<dbReference type="PANTHER" id="PTHR42648">
    <property type="entry name" value="TRANSPOSASE, PUTATIVE-RELATED"/>
    <property type="match status" value="1"/>
</dbReference>
<dbReference type="PANTHER" id="PTHR42648:SF11">
    <property type="entry name" value="TRANSPOSON TY4-P GAG-POL POLYPROTEIN"/>
    <property type="match status" value="1"/>
</dbReference>
<dbReference type="Pfam" id="PF00665">
    <property type="entry name" value="rve"/>
    <property type="match status" value="1"/>
</dbReference>
<dbReference type="Pfam" id="PF07727">
    <property type="entry name" value="RVT_2"/>
    <property type="match status" value="1"/>
</dbReference>
<dbReference type="Pfam" id="PF01021">
    <property type="entry name" value="TYA"/>
    <property type="match status" value="1"/>
</dbReference>
<dbReference type="SUPFAM" id="SSF56672">
    <property type="entry name" value="DNA/RNA polymerases"/>
    <property type="match status" value="1"/>
</dbReference>
<dbReference type="SUPFAM" id="SSF53098">
    <property type="entry name" value="Ribonuclease H-like"/>
    <property type="match status" value="1"/>
</dbReference>
<dbReference type="PROSITE" id="PS00141">
    <property type="entry name" value="ASP_PROTEASE"/>
    <property type="match status" value="1"/>
</dbReference>
<dbReference type="PROSITE" id="PS50994">
    <property type="entry name" value="INTEGRASE"/>
    <property type="match status" value="1"/>
</dbReference>
<protein>
    <recommendedName>
        <fullName>Transposon Ty1-NL2 Gag-Pol polyprotein</fullName>
    </recommendedName>
    <alternativeName>
        <fullName>Gag-Pol-p199</fullName>
    </alternativeName>
    <alternativeName>
        <fullName>TY1A-TY1B</fullName>
    </alternativeName>
    <alternativeName>
        <fullName>Transposon Ty1 TYA-TYB polyprotein</fullName>
    </alternativeName>
    <alternativeName>
        <fullName>p190</fullName>
    </alternativeName>
    <component>
        <recommendedName>
            <fullName>Capsid protein</fullName>
            <shortName>CA</shortName>
        </recommendedName>
        <alternativeName>
            <fullName>Gag-p45</fullName>
        </alternativeName>
        <alternativeName>
            <fullName>p54</fullName>
        </alternativeName>
    </component>
    <component>
        <recommendedName>
            <fullName>Ty1 protease</fullName>
            <shortName>PR</shortName>
            <ecNumber>3.4.23.-</ecNumber>
        </recommendedName>
        <alternativeName>
            <fullName>Pol-p20</fullName>
        </alternativeName>
        <alternativeName>
            <fullName>p23</fullName>
        </alternativeName>
    </component>
    <component>
        <recommendedName>
            <fullName>Integrase</fullName>
            <shortName>IN</shortName>
        </recommendedName>
        <alternativeName>
            <fullName>Pol-p71</fullName>
        </alternativeName>
        <alternativeName>
            <fullName>p84</fullName>
        </alternativeName>
        <alternativeName>
            <fullName>p90</fullName>
        </alternativeName>
    </component>
    <component>
        <recommendedName>
            <fullName>Reverse transcriptase/ribonuclease H</fullName>
            <shortName>RT</shortName>
            <shortName>RT-RH</shortName>
            <ecNumber>2.7.7.49</ecNumber>
            <ecNumber>2.7.7.7</ecNumber>
            <ecNumber>3.1.26.4</ecNumber>
        </recommendedName>
        <alternativeName>
            <fullName>Pol-p63</fullName>
        </alternativeName>
        <alternativeName>
            <fullName>p60</fullName>
        </alternativeName>
    </component>
</protein>
<name>YN12B_YEAST</name>
<comment type="function">
    <text evidence="1">Capsid protein (CA) is the structural component of the virus-like particle (VLP), forming the shell that encapsulates the retrotransposons dimeric RNA genome. The particles are assembled from trimer-clustered units and there are holes in the capsid shells that allow for the diffusion of macromolecules. CA also has nucleocapsid-like chaperone activity, promoting primer tRNA(i)-Met annealing to the multipartite primer-binding site (PBS), dimerization of Ty1 RNA and initiation of reverse transcription (By similarity).</text>
</comment>
<comment type="function">
    <text evidence="1">The aspartyl protease (PR) mediates the proteolytic cleavages of the Gag and Gag-Pol polyproteins after assembly of the VLP.</text>
</comment>
<comment type="function">
    <text evidence="1">Reverse transcriptase/ribonuclease H (RT) is a multifunctional enzyme that catalyzes the conversion of the retro-elements RNA genome into dsDNA within the VLP. The enzyme displays a DNA polymerase activity that can copy either DNA or RNA templates, and a ribonuclease H (RNase H) activity that cleaves the RNA strand of RNA-DNA heteroduplexes during plus-strand synthesis and hydrolyzes RNA primers. The conversion leads to a linear dsDNA copy of the retrotransposon that includes long terminal repeats (LTRs) at both ends (By similarity).</text>
</comment>
<comment type="function">
    <text evidence="1">Integrase (IN) targets the VLP to the nucleus, where a subparticle preintegration complex (PIC) containing at least integrase and the newly synthesized dsDNA copy of the retrotransposon must transit the nuclear membrane. Once in the nucleus, integrase performs the integration of the dsDNA into the host genome (By similarity).</text>
</comment>
<comment type="catalytic activity">
    <reaction>
        <text>DNA(n) + a 2'-deoxyribonucleoside 5'-triphosphate = DNA(n+1) + diphosphate</text>
        <dbReference type="Rhea" id="RHEA:22508"/>
        <dbReference type="Rhea" id="RHEA-COMP:17339"/>
        <dbReference type="Rhea" id="RHEA-COMP:17340"/>
        <dbReference type="ChEBI" id="CHEBI:33019"/>
        <dbReference type="ChEBI" id="CHEBI:61560"/>
        <dbReference type="ChEBI" id="CHEBI:173112"/>
        <dbReference type="EC" id="2.7.7.49"/>
    </reaction>
</comment>
<comment type="catalytic activity">
    <reaction>
        <text>DNA(n) + a 2'-deoxyribonucleoside 5'-triphosphate = DNA(n+1) + diphosphate</text>
        <dbReference type="Rhea" id="RHEA:22508"/>
        <dbReference type="Rhea" id="RHEA-COMP:17339"/>
        <dbReference type="Rhea" id="RHEA-COMP:17340"/>
        <dbReference type="ChEBI" id="CHEBI:33019"/>
        <dbReference type="ChEBI" id="CHEBI:61560"/>
        <dbReference type="ChEBI" id="CHEBI:173112"/>
        <dbReference type="EC" id="2.7.7.7"/>
    </reaction>
</comment>
<comment type="catalytic activity">
    <reaction>
        <text>Endonucleolytic cleavage to 5'-phosphomonoester.</text>
        <dbReference type="EC" id="3.1.26.4"/>
    </reaction>
</comment>
<comment type="subunit">
    <text evidence="1">The capsid protein forms a homotrimer, from which the VLPs are assembled. The protease is a homodimer, whose active site consists of two apposed aspartic acid residues (By similarity).</text>
</comment>
<comment type="subcellular location">
    <subcellularLocation>
        <location>Cytoplasm</location>
    </subcellularLocation>
    <subcellularLocation>
        <location evidence="1">Nucleus</location>
    </subcellularLocation>
</comment>
<comment type="alternative products">
    <event type="ribosomal frameshifting"/>
    <isoform>
        <id>Q99337-1</id>
        <name>Transposon Ty1-NL2 Gag-Pol polyprotein</name>
        <sequence type="displayed"/>
    </isoform>
    <isoform>
        <id>Q12470-1</id>
        <name>Transposon Ty1-NL2 Gag polyprotein</name>
        <sequence type="external"/>
    </isoform>
    <text evidence="1">The Gag-Pol polyprotein is generated by a +1 ribosomal frameshift. The ratio of Gag:Gag-Pol varies between 20:1 and 5:1 (By similarity).</text>
</comment>
<comment type="domain">
    <text evidence="1">The C-terminal RNA-binding region of CA is sufficient for all its nucleocapsid-like chaperone activities.</text>
</comment>
<comment type="domain">
    <text evidence="1">Integrase core domain contains the D-x(n)-D-x(35)-E motif, named for the phylogenetically conserved glutamic acid and aspartic acid residues and the invariant 35 amino acid spacing between the second and third acidic residues. Each acidic residue of the D,D(35)E motif is independently essential for the 3'-processing and strand transfer activities of purified integrase protein (By similarity).</text>
</comment>
<comment type="PTM">
    <text evidence="1">Initially, virus-like particles (VLPs) are composed of the structural unprocessed proteins Gag and Gag-Pol, and also contain the host initiator methionine tRNA (tRNA(i)-Met) which serves as a primer for minus-strand DNA synthesis, and a dimer of genomic Ty RNA. Processing of the polyproteins occurs within the particle and proceeds by an ordered pathway, called maturation. First, the protease (PR) is released by autocatalytic cleavage of the Gag-Pol polyprotein yielding capsid protein p45 and a Pol-p154 precursor protein. This cleavage is a prerequisite for subsequent processing of Pol-p154 at the remaining sites to release the mature structural and catalytic proteins. Maturation takes place prior to the RT reaction and is required to produce transposition-competent VLPs (By similarity).</text>
</comment>
<comment type="miscellaneous">
    <text>Retrotransposons are mobile genetic entities that are able to replicate via an RNA intermediate and a reverse transcription step. In contrast to retroviruses, retrotransposons are non-infectious, lack an envelope and remain intracellular. Ty1 retrotransposons belong to the copia elements (pseudoviridae).</text>
</comment>
<comment type="miscellaneous">
    <molecule>Isoform Transposon Ty1-NL2 Gag-Pol polyprotein</molecule>
    <text>Produced by +1 ribosomal frameshifting between codon Leu-435 and Gly-436 of the YNL054W-A ORF.</text>
</comment>
<accession>Q99337</accession>
<accession>S6G3B3</accession>
<evidence type="ECO:0000250" key="1"/>
<evidence type="ECO:0000255" key="2">
    <source>
        <dbReference type="PROSITE-ProRule" id="PRU00457"/>
    </source>
</evidence>
<evidence type="ECO:0000255" key="3">
    <source>
        <dbReference type="PROSITE-ProRule" id="PRU10094"/>
    </source>
</evidence>
<evidence type="ECO:0000256" key="4">
    <source>
        <dbReference type="SAM" id="MobiDB-lite"/>
    </source>
</evidence>
<keyword id="KW-0064">Aspartyl protease</keyword>
<keyword id="KW-0067">ATP-binding</keyword>
<keyword id="KW-0963">Cytoplasm</keyword>
<keyword id="KW-0229">DNA integration</keyword>
<keyword id="KW-0233">DNA recombination</keyword>
<keyword id="KW-0238">DNA-binding</keyword>
<keyword id="KW-0239">DNA-directed DNA polymerase</keyword>
<keyword id="KW-0255">Endonuclease</keyword>
<keyword id="KW-0378">Hydrolase</keyword>
<keyword id="KW-0460">Magnesium</keyword>
<keyword id="KW-0479">Metal-binding</keyword>
<keyword id="KW-0511">Multifunctional enzyme</keyword>
<keyword id="KW-0540">Nuclease</keyword>
<keyword id="KW-0547">Nucleotide-binding</keyword>
<keyword id="KW-0548">Nucleotidyltransferase</keyword>
<keyword id="KW-0539">Nucleus</keyword>
<keyword id="KW-0645">Protease</keyword>
<keyword id="KW-1185">Reference proteome</keyword>
<keyword id="KW-0688">Ribosomal frameshifting</keyword>
<keyword id="KW-0694">RNA-binding</keyword>
<keyword id="KW-0695">RNA-directed DNA polymerase</keyword>
<keyword id="KW-0808">Transferase</keyword>
<keyword id="KW-0814">Transposable element</keyword>
<keyword id="KW-0815">Transposition</keyword>
<keyword id="KW-1188">Viral release from host cell</keyword>
<keyword id="KW-0917">Virion maturation</keyword>
<keyword id="KW-0862">Zinc</keyword>
<keyword id="KW-0863">Zinc-finger</keyword>
<organism>
    <name type="scientific">Saccharomyces cerevisiae (strain ATCC 204508 / S288c)</name>
    <name type="common">Baker's yeast</name>
    <dbReference type="NCBI Taxonomy" id="559292"/>
    <lineage>
        <taxon>Eukaryota</taxon>
        <taxon>Fungi</taxon>
        <taxon>Dikarya</taxon>
        <taxon>Ascomycota</taxon>
        <taxon>Saccharomycotina</taxon>
        <taxon>Saccharomycetes</taxon>
        <taxon>Saccharomycetales</taxon>
        <taxon>Saccharomycetaceae</taxon>
        <taxon>Saccharomyces</taxon>
    </lineage>
</organism>
<proteinExistence type="inferred from homology"/>
<reference key="1">
    <citation type="journal article" date="1997" name="Nature">
        <title>The nucleotide sequence of Saccharomyces cerevisiae chromosome XIV and its evolutionary implications.</title>
        <authorList>
            <person name="Philippsen P."/>
            <person name="Kleine K."/>
            <person name="Poehlmann R."/>
            <person name="Duesterhoeft A."/>
            <person name="Hamberg K."/>
            <person name="Hegemann J.H."/>
            <person name="Obermaier B."/>
            <person name="Urrestarazu L.A."/>
            <person name="Aert R."/>
            <person name="Albermann K."/>
            <person name="Altmann R."/>
            <person name="Andre B."/>
            <person name="Baladron V."/>
            <person name="Ballesta J.P.G."/>
            <person name="Becam A.-M."/>
            <person name="Beinhauer J.D."/>
            <person name="Boskovic J."/>
            <person name="Buitrago M.J."/>
            <person name="Bussereau F."/>
            <person name="Coster F."/>
            <person name="Crouzet M."/>
            <person name="D'Angelo M."/>
            <person name="Dal Pero F."/>
            <person name="De Antoni A."/>
            <person name="del Rey F."/>
            <person name="Doignon F."/>
            <person name="Domdey H."/>
            <person name="Dubois E."/>
            <person name="Fiedler T.A."/>
            <person name="Fleig U."/>
            <person name="Floeth M."/>
            <person name="Fritz C."/>
            <person name="Gaillardin C."/>
            <person name="Garcia-Cantalejo J.M."/>
            <person name="Glansdorff N."/>
            <person name="Goffeau A."/>
            <person name="Gueldener U."/>
            <person name="Herbert C.J."/>
            <person name="Heumann K."/>
            <person name="Heuss-Neitzel D."/>
            <person name="Hilbert H."/>
            <person name="Hinni K."/>
            <person name="Iraqui Houssaini I."/>
            <person name="Jacquet M."/>
            <person name="Jimenez A."/>
            <person name="Jonniaux J.-L."/>
            <person name="Karpfinger-Hartl L."/>
            <person name="Lanfranchi G."/>
            <person name="Lepingle A."/>
            <person name="Levesque H."/>
            <person name="Lyck R."/>
            <person name="Maftahi M."/>
            <person name="Mallet L."/>
            <person name="Maurer C.T.C."/>
            <person name="Messenguy F."/>
            <person name="Mewes H.-W."/>
            <person name="Moestl D."/>
            <person name="Nasr F."/>
            <person name="Nicaud J.-M."/>
            <person name="Niedenthal R.K."/>
            <person name="Pandolfo D."/>
            <person name="Pierard A."/>
            <person name="Piravandi E."/>
            <person name="Planta R.J."/>
            <person name="Pohl T.M."/>
            <person name="Purnelle B."/>
            <person name="Rebischung C."/>
            <person name="Remacha M.A."/>
            <person name="Revuelta J.L."/>
            <person name="Rinke M."/>
            <person name="Saiz J.E."/>
            <person name="Sartorello F."/>
            <person name="Scherens B."/>
            <person name="Sen-Gupta M."/>
            <person name="Soler-Mira A."/>
            <person name="Urbanus J.H.M."/>
            <person name="Valle G."/>
            <person name="Van Dyck L."/>
            <person name="Verhasselt P."/>
            <person name="Vierendeels F."/>
            <person name="Vissers S."/>
            <person name="Voet M."/>
            <person name="Volckaert G."/>
            <person name="Wach A."/>
            <person name="Wambutt R."/>
            <person name="Wedler H."/>
            <person name="Zollner A."/>
            <person name="Hani J."/>
        </authorList>
    </citation>
    <scope>NUCLEOTIDE SEQUENCE [LARGE SCALE GENOMIC DNA]</scope>
    <source>
        <strain>ATCC 204508 / S288c</strain>
    </source>
</reference>
<reference key="2">
    <citation type="journal article" date="2014" name="G3 (Bethesda)">
        <title>The reference genome sequence of Saccharomyces cerevisiae: Then and now.</title>
        <authorList>
            <person name="Engel S.R."/>
            <person name="Dietrich F.S."/>
            <person name="Fisk D.G."/>
            <person name="Binkley G."/>
            <person name="Balakrishnan R."/>
            <person name="Costanzo M.C."/>
            <person name="Dwight S.S."/>
            <person name="Hitz B.C."/>
            <person name="Karra K."/>
            <person name="Nash R.S."/>
            <person name="Weng S."/>
            <person name="Wong E.D."/>
            <person name="Lloyd P."/>
            <person name="Skrzypek M.S."/>
            <person name="Miyasato S.R."/>
            <person name="Simison M."/>
            <person name="Cherry J.M."/>
        </authorList>
    </citation>
    <scope>GENOME REANNOTATION</scope>
    <source>
        <strain>ATCC 204508 / S288c</strain>
    </source>
</reference>
<reference key="3">
    <citation type="journal article" date="1998" name="Genome Res.">
        <title>Transposable elements and genome organization: a comprehensive survey of retrotransposons revealed by the complete Saccharomyces cerevisiae genome sequence.</title>
        <authorList>
            <person name="Kim J.M."/>
            <person name="Vanguri S."/>
            <person name="Boeke J.D."/>
            <person name="Gabriel A."/>
            <person name="Voytas D.F."/>
        </authorList>
    </citation>
    <scope>NOMENCLATURE</scope>
</reference>
<reference key="4">
    <citation type="journal article" date="2005" name="Cytogenet. Genome Res.">
        <title>Happy together: the life and times of Ty retrotransposons and their hosts.</title>
        <authorList>
            <person name="Lesage P."/>
            <person name="Todeschini A.L."/>
        </authorList>
    </citation>
    <scope>REVIEW</scope>
</reference>
<reference key="5">
    <citation type="journal article" date="2005" name="Cytogenet. Genome Res.">
        <title>Reverse transcriptase and integrase of the Saccharomyces cerevisiae Ty1 element.</title>
        <authorList>
            <person name="Wilhelm F.-X."/>
            <person name="Wilhelm M."/>
            <person name="Gabriel A."/>
        </authorList>
    </citation>
    <scope>REVIEW</scope>
    <scope>DOMAINS</scope>
</reference>